<accession>A8G3J6</accession>
<feature type="chain" id="PRO_1000147313" description="Nucleotide-binding protein P9215_05621">
    <location>
        <begin position="1"/>
        <end position="165"/>
    </location>
</feature>
<protein>
    <recommendedName>
        <fullName evidence="1">Nucleotide-binding protein P9215_05621</fullName>
    </recommendedName>
</protein>
<proteinExistence type="inferred from homology"/>
<dbReference type="EMBL" id="CP000825">
    <property type="protein sequence ID" value="ABV50177.1"/>
    <property type="molecule type" value="Genomic_DNA"/>
</dbReference>
<dbReference type="RefSeq" id="WP_012007305.1">
    <property type="nucleotide sequence ID" value="NC_009840.1"/>
</dbReference>
<dbReference type="SMR" id="A8G3J6"/>
<dbReference type="STRING" id="93060.P9215_05621"/>
<dbReference type="KEGG" id="pmh:P9215_05621"/>
<dbReference type="eggNOG" id="COG1666">
    <property type="taxonomic scope" value="Bacteria"/>
</dbReference>
<dbReference type="HOGENOM" id="CLU_099839_0_0_3"/>
<dbReference type="OrthoDB" id="9801447at2"/>
<dbReference type="Proteomes" id="UP000002014">
    <property type="component" value="Chromosome"/>
</dbReference>
<dbReference type="GO" id="GO:0005829">
    <property type="term" value="C:cytosol"/>
    <property type="evidence" value="ECO:0007669"/>
    <property type="project" value="TreeGrafter"/>
</dbReference>
<dbReference type="GO" id="GO:0000166">
    <property type="term" value="F:nucleotide binding"/>
    <property type="evidence" value="ECO:0007669"/>
    <property type="project" value="TreeGrafter"/>
</dbReference>
<dbReference type="CDD" id="cd11740">
    <property type="entry name" value="YajQ_like"/>
    <property type="match status" value="1"/>
</dbReference>
<dbReference type="Gene3D" id="3.30.70.860">
    <property type="match status" value="1"/>
</dbReference>
<dbReference type="Gene3D" id="3.30.70.990">
    <property type="entry name" value="YajQ-like, domain 2"/>
    <property type="match status" value="1"/>
</dbReference>
<dbReference type="HAMAP" id="MF_00632">
    <property type="entry name" value="YajQ"/>
    <property type="match status" value="1"/>
</dbReference>
<dbReference type="InterPro" id="IPR007551">
    <property type="entry name" value="DUF520"/>
</dbReference>
<dbReference type="InterPro" id="IPR035571">
    <property type="entry name" value="UPF0234-like_C"/>
</dbReference>
<dbReference type="InterPro" id="IPR035570">
    <property type="entry name" value="UPF0234_N"/>
</dbReference>
<dbReference type="InterPro" id="IPR036183">
    <property type="entry name" value="YajQ-like_sf"/>
</dbReference>
<dbReference type="NCBIfam" id="NF003819">
    <property type="entry name" value="PRK05412.1"/>
    <property type="match status" value="1"/>
</dbReference>
<dbReference type="PANTHER" id="PTHR30476">
    <property type="entry name" value="UPF0234 PROTEIN YAJQ"/>
    <property type="match status" value="1"/>
</dbReference>
<dbReference type="PANTHER" id="PTHR30476:SF0">
    <property type="entry name" value="UPF0234 PROTEIN YAJQ"/>
    <property type="match status" value="1"/>
</dbReference>
<dbReference type="Pfam" id="PF04461">
    <property type="entry name" value="DUF520"/>
    <property type="match status" value="1"/>
</dbReference>
<dbReference type="SUPFAM" id="SSF89963">
    <property type="entry name" value="YajQ-like"/>
    <property type="match status" value="2"/>
</dbReference>
<evidence type="ECO:0000255" key="1">
    <source>
        <dbReference type="HAMAP-Rule" id="MF_00632"/>
    </source>
</evidence>
<reference key="1">
    <citation type="journal article" date="2007" name="PLoS Genet.">
        <title>Patterns and implications of gene gain and loss in the evolution of Prochlorococcus.</title>
        <authorList>
            <person name="Kettler G.C."/>
            <person name="Martiny A.C."/>
            <person name="Huang K."/>
            <person name="Zucker J."/>
            <person name="Coleman M.L."/>
            <person name="Rodrigue S."/>
            <person name="Chen F."/>
            <person name="Lapidus A."/>
            <person name="Ferriera S."/>
            <person name="Johnson J."/>
            <person name="Steglich C."/>
            <person name="Church G.M."/>
            <person name="Richardson P."/>
            <person name="Chisholm S.W."/>
        </authorList>
    </citation>
    <scope>NUCLEOTIDE SEQUENCE [LARGE SCALE GENOMIC DNA]</scope>
    <source>
        <strain>MIT 9215</strain>
    </source>
</reference>
<comment type="function">
    <text evidence="1">Nucleotide-binding protein.</text>
</comment>
<comment type="similarity">
    <text evidence="1">Belongs to the YajQ family.</text>
</comment>
<name>Y562_PROM2</name>
<gene>
    <name type="ordered locus">P9215_05621</name>
</gene>
<organism>
    <name type="scientific">Prochlorococcus marinus (strain MIT 9215)</name>
    <dbReference type="NCBI Taxonomy" id="93060"/>
    <lineage>
        <taxon>Bacteria</taxon>
        <taxon>Bacillati</taxon>
        <taxon>Cyanobacteriota</taxon>
        <taxon>Cyanophyceae</taxon>
        <taxon>Synechococcales</taxon>
        <taxon>Prochlorococcaceae</taxon>
        <taxon>Prochlorococcus</taxon>
    </lineage>
</organism>
<keyword id="KW-0547">Nucleotide-binding</keyword>
<sequence length="165" mass="18891">MAESFSFDVVSDFDRQELVNTLDQVKREISQRYDLKGTETSVDLDKENIFIITNSELTLNSVNDIIRQKAIKRNLSLKIFDYGEIEMVSGNRVKQTILLKQGIKQDIAKKISKNIRDQIKKINVSINGDTLRVASKSKNDLQFAIKLVSELEESLNIPLKANNFR</sequence>